<protein>
    <recommendedName>
        <fullName evidence="1">UDP-N-acetylenolpyruvoylglucosamine reductase</fullName>
        <ecNumber evidence="1">1.3.1.98</ecNumber>
    </recommendedName>
    <alternativeName>
        <fullName evidence="1">UDP-N-acetylmuramate dehydrogenase</fullName>
    </alternativeName>
</protein>
<name>MURB_LEGPC</name>
<organism>
    <name type="scientific">Legionella pneumophila (strain Corby)</name>
    <dbReference type="NCBI Taxonomy" id="400673"/>
    <lineage>
        <taxon>Bacteria</taxon>
        <taxon>Pseudomonadati</taxon>
        <taxon>Pseudomonadota</taxon>
        <taxon>Gammaproteobacteria</taxon>
        <taxon>Legionellales</taxon>
        <taxon>Legionellaceae</taxon>
        <taxon>Legionella</taxon>
    </lineage>
</organism>
<dbReference type="EC" id="1.3.1.98" evidence="1"/>
<dbReference type="EMBL" id="CP000675">
    <property type="protein sequence ID" value="ABQ54513.1"/>
    <property type="molecule type" value="Genomic_DNA"/>
</dbReference>
<dbReference type="RefSeq" id="WP_011947532.1">
    <property type="nucleotide sequence ID" value="NZ_JAPMSS010000010.1"/>
</dbReference>
<dbReference type="SMR" id="A5IAW3"/>
<dbReference type="KEGG" id="lpc:LPC_0528"/>
<dbReference type="HOGENOM" id="CLU_035304_1_1_6"/>
<dbReference type="UniPathway" id="UPA00219"/>
<dbReference type="GO" id="GO:0005829">
    <property type="term" value="C:cytosol"/>
    <property type="evidence" value="ECO:0007669"/>
    <property type="project" value="TreeGrafter"/>
</dbReference>
<dbReference type="GO" id="GO:0071949">
    <property type="term" value="F:FAD binding"/>
    <property type="evidence" value="ECO:0007669"/>
    <property type="project" value="InterPro"/>
</dbReference>
<dbReference type="GO" id="GO:0008762">
    <property type="term" value="F:UDP-N-acetylmuramate dehydrogenase activity"/>
    <property type="evidence" value="ECO:0007669"/>
    <property type="project" value="UniProtKB-UniRule"/>
</dbReference>
<dbReference type="GO" id="GO:0051301">
    <property type="term" value="P:cell division"/>
    <property type="evidence" value="ECO:0007669"/>
    <property type="project" value="UniProtKB-KW"/>
</dbReference>
<dbReference type="GO" id="GO:0071555">
    <property type="term" value="P:cell wall organization"/>
    <property type="evidence" value="ECO:0007669"/>
    <property type="project" value="UniProtKB-KW"/>
</dbReference>
<dbReference type="GO" id="GO:0009252">
    <property type="term" value="P:peptidoglycan biosynthetic process"/>
    <property type="evidence" value="ECO:0007669"/>
    <property type="project" value="UniProtKB-UniRule"/>
</dbReference>
<dbReference type="GO" id="GO:0008360">
    <property type="term" value="P:regulation of cell shape"/>
    <property type="evidence" value="ECO:0007669"/>
    <property type="project" value="UniProtKB-KW"/>
</dbReference>
<dbReference type="Gene3D" id="3.30.465.10">
    <property type="match status" value="1"/>
</dbReference>
<dbReference type="Gene3D" id="3.90.78.10">
    <property type="entry name" value="UDP-N-acetylenolpyruvoylglucosamine reductase, C-terminal domain"/>
    <property type="match status" value="1"/>
</dbReference>
<dbReference type="Gene3D" id="3.30.43.10">
    <property type="entry name" value="Uridine Diphospho-n-acetylenolpyruvylglucosamine Reductase, domain 2"/>
    <property type="match status" value="1"/>
</dbReference>
<dbReference type="HAMAP" id="MF_00037">
    <property type="entry name" value="MurB"/>
    <property type="match status" value="1"/>
</dbReference>
<dbReference type="InterPro" id="IPR016166">
    <property type="entry name" value="FAD-bd_PCMH"/>
</dbReference>
<dbReference type="InterPro" id="IPR036318">
    <property type="entry name" value="FAD-bd_PCMH-like_sf"/>
</dbReference>
<dbReference type="InterPro" id="IPR016167">
    <property type="entry name" value="FAD-bd_PCMH_sub1"/>
</dbReference>
<dbReference type="InterPro" id="IPR016169">
    <property type="entry name" value="FAD-bd_PCMH_sub2"/>
</dbReference>
<dbReference type="InterPro" id="IPR003170">
    <property type="entry name" value="MurB"/>
</dbReference>
<dbReference type="InterPro" id="IPR011601">
    <property type="entry name" value="MurB_C"/>
</dbReference>
<dbReference type="InterPro" id="IPR036635">
    <property type="entry name" value="MurB_C_sf"/>
</dbReference>
<dbReference type="InterPro" id="IPR006094">
    <property type="entry name" value="Oxid_FAD_bind_N"/>
</dbReference>
<dbReference type="NCBIfam" id="TIGR00179">
    <property type="entry name" value="murB"/>
    <property type="match status" value="1"/>
</dbReference>
<dbReference type="NCBIfam" id="NF010480">
    <property type="entry name" value="PRK13905.1"/>
    <property type="match status" value="1"/>
</dbReference>
<dbReference type="PANTHER" id="PTHR21071">
    <property type="entry name" value="UDP-N-ACETYLENOLPYRUVOYLGLUCOSAMINE REDUCTASE"/>
    <property type="match status" value="1"/>
</dbReference>
<dbReference type="PANTHER" id="PTHR21071:SF4">
    <property type="entry name" value="UDP-N-ACETYLENOLPYRUVOYLGLUCOSAMINE REDUCTASE"/>
    <property type="match status" value="1"/>
</dbReference>
<dbReference type="Pfam" id="PF01565">
    <property type="entry name" value="FAD_binding_4"/>
    <property type="match status" value="1"/>
</dbReference>
<dbReference type="Pfam" id="PF02873">
    <property type="entry name" value="MurB_C"/>
    <property type="match status" value="1"/>
</dbReference>
<dbReference type="SUPFAM" id="SSF56176">
    <property type="entry name" value="FAD-binding/transporter-associated domain-like"/>
    <property type="match status" value="1"/>
</dbReference>
<dbReference type="SUPFAM" id="SSF56194">
    <property type="entry name" value="Uridine diphospho-N-Acetylenolpyruvylglucosamine reductase, MurB, C-terminal domain"/>
    <property type="match status" value="1"/>
</dbReference>
<dbReference type="PROSITE" id="PS51387">
    <property type="entry name" value="FAD_PCMH"/>
    <property type="match status" value="1"/>
</dbReference>
<feature type="chain" id="PRO_1000002891" description="UDP-N-acetylenolpyruvoylglucosamine reductase">
    <location>
        <begin position="1"/>
        <end position="308"/>
    </location>
</feature>
<feature type="domain" description="FAD-binding PCMH-type" evidence="1">
    <location>
        <begin position="32"/>
        <end position="196"/>
    </location>
</feature>
<feature type="active site" evidence="1">
    <location>
        <position position="176"/>
    </location>
</feature>
<feature type="active site" description="Proton donor" evidence="1">
    <location>
        <position position="225"/>
    </location>
</feature>
<feature type="active site" evidence="1">
    <location>
        <position position="296"/>
    </location>
</feature>
<gene>
    <name evidence="1" type="primary">murB</name>
    <name type="ordered locus">LPC_0528</name>
</gene>
<accession>A5IAW3</accession>
<sequence>MSITGMDSSHVTESQGALLFNEPLAEYTTWRVGGPAARLYKPANIDDLALFLSRLPFDEPLLWLGLGSNSLIRDGGFSGTVILTQGCLKEMTLLSDNCIRVEAGVSCASMARFSARNNLSGGEFWAGIPGTMGGALRMNAGCHGGETWQSVIEVQTINRRGEIRTRKPEEFEVAYRHVAGLGDEWFISAKLQLSPGNKETSLQLIKDLLAHRAKTQPTNEYNCGSVFRNPPGDFAARLIESCGLKGVSIGGAVVSEKHANFIINHQGTATAANIEALIHLVQTKVREQTSIELIREVHIIGDANVQTR</sequence>
<reference key="1">
    <citation type="submission" date="2006-11" db="EMBL/GenBank/DDBJ databases">
        <title>Identification and characterization of a new conjugation/ type IVA secretion system (trb/tra) of L. pneumophila Corby localized on a mobile genomic island.</title>
        <authorList>
            <person name="Gloeckner G."/>
            <person name="Albert-Weissenberger C."/>
            <person name="Weinmann E."/>
            <person name="Jacobi S."/>
            <person name="Schunder E."/>
            <person name="Steinert M."/>
            <person name="Buchrieser C."/>
            <person name="Hacker J."/>
            <person name="Heuner K."/>
        </authorList>
    </citation>
    <scope>NUCLEOTIDE SEQUENCE [LARGE SCALE GENOMIC DNA]</scope>
    <source>
        <strain>Corby</strain>
    </source>
</reference>
<keyword id="KW-0131">Cell cycle</keyword>
<keyword id="KW-0132">Cell division</keyword>
<keyword id="KW-0133">Cell shape</keyword>
<keyword id="KW-0961">Cell wall biogenesis/degradation</keyword>
<keyword id="KW-0963">Cytoplasm</keyword>
<keyword id="KW-0274">FAD</keyword>
<keyword id="KW-0285">Flavoprotein</keyword>
<keyword id="KW-0521">NADP</keyword>
<keyword id="KW-0560">Oxidoreductase</keyword>
<keyword id="KW-0573">Peptidoglycan synthesis</keyword>
<proteinExistence type="inferred from homology"/>
<comment type="function">
    <text evidence="1">Cell wall formation.</text>
</comment>
<comment type="catalytic activity">
    <reaction evidence="1">
        <text>UDP-N-acetyl-alpha-D-muramate + NADP(+) = UDP-N-acetyl-3-O-(1-carboxyvinyl)-alpha-D-glucosamine + NADPH + H(+)</text>
        <dbReference type="Rhea" id="RHEA:12248"/>
        <dbReference type="ChEBI" id="CHEBI:15378"/>
        <dbReference type="ChEBI" id="CHEBI:57783"/>
        <dbReference type="ChEBI" id="CHEBI:58349"/>
        <dbReference type="ChEBI" id="CHEBI:68483"/>
        <dbReference type="ChEBI" id="CHEBI:70757"/>
        <dbReference type="EC" id="1.3.1.98"/>
    </reaction>
</comment>
<comment type="cofactor">
    <cofactor evidence="1">
        <name>FAD</name>
        <dbReference type="ChEBI" id="CHEBI:57692"/>
    </cofactor>
</comment>
<comment type="pathway">
    <text evidence="1">Cell wall biogenesis; peptidoglycan biosynthesis.</text>
</comment>
<comment type="subcellular location">
    <subcellularLocation>
        <location evidence="1">Cytoplasm</location>
    </subcellularLocation>
</comment>
<comment type="similarity">
    <text evidence="1">Belongs to the MurB family.</text>
</comment>
<evidence type="ECO:0000255" key="1">
    <source>
        <dbReference type="HAMAP-Rule" id="MF_00037"/>
    </source>
</evidence>